<comment type="function">
    <text evidence="1">Toxic component of a type II toxin-antitoxin (TA) system. MazF is a sequence-specific endoribonuclease that inhibits protein synthesis and induces bacterial stasis. It is very stable, single-strand specific and cleavage is independent of the ribosome. The endoribonuclease activity (a toxin) is inhibited by the labile cognate antitoxin MazE. Toxicity results when the levels of MazE decrease in the cell, leading to mRNA degradation. Both MazE and MazE-MazF bind to the promoter region of the mazE-mazF operon to inhibit their transcription.</text>
</comment>
<comment type="subunit">
    <text evidence="1">Probably a dimer. Forms a heterohexamer composed of alternating toxin and antitoxin homodimers MazF(2)-MazE(2)-MazF(2).</text>
</comment>
<comment type="similarity">
    <text evidence="2">Belongs to the PemK/MazF family.</text>
</comment>
<reference key="1">
    <citation type="journal article" date="2001" name="Nature">
        <title>Genome sequence of enterohaemorrhagic Escherichia coli O157:H7.</title>
        <authorList>
            <person name="Perna N.T."/>
            <person name="Plunkett G. III"/>
            <person name="Burland V."/>
            <person name="Mau B."/>
            <person name="Glasner J.D."/>
            <person name="Rose D.J."/>
            <person name="Mayhew G.F."/>
            <person name="Evans P.S."/>
            <person name="Gregor J."/>
            <person name="Kirkpatrick H.A."/>
            <person name="Posfai G."/>
            <person name="Hackett J."/>
            <person name="Klink S."/>
            <person name="Boutin A."/>
            <person name="Shao Y."/>
            <person name="Miller L."/>
            <person name="Grotbeck E.J."/>
            <person name="Davis N.W."/>
            <person name="Lim A."/>
            <person name="Dimalanta E.T."/>
            <person name="Potamousis K."/>
            <person name="Apodaca J."/>
            <person name="Anantharaman T.S."/>
            <person name="Lin J."/>
            <person name="Yen G."/>
            <person name="Schwartz D.C."/>
            <person name="Welch R.A."/>
            <person name="Blattner F.R."/>
        </authorList>
    </citation>
    <scope>NUCLEOTIDE SEQUENCE [LARGE SCALE GENOMIC DNA]</scope>
    <source>
        <strain>O157:H7 / EDL933 / ATCC 700927 / EHEC</strain>
    </source>
</reference>
<reference key="2">
    <citation type="journal article" date="2001" name="DNA Res.">
        <title>Complete genome sequence of enterohemorrhagic Escherichia coli O157:H7 and genomic comparison with a laboratory strain K-12.</title>
        <authorList>
            <person name="Hayashi T."/>
            <person name="Makino K."/>
            <person name="Ohnishi M."/>
            <person name="Kurokawa K."/>
            <person name="Ishii K."/>
            <person name="Yokoyama K."/>
            <person name="Han C.-G."/>
            <person name="Ohtsubo E."/>
            <person name="Nakayama K."/>
            <person name="Murata T."/>
            <person name="Tanaka M."/>
            <person name="Tobe T."/>
            <person name="Iida T."/>
            <person name="Takami H."/>
            <person name="Honda T."/>
            <person name="Sasakawa C."/>
            <person name="Ogasawara N."/>
            <person name="Yasunaga T."/>
            <person name="Kuhara S."/>
            <person name="Shiba T."/>
            <person name="Hattori M."/>
            <person name="Shinagawa H."/>
        </authorList>
    </citation>
    <scope>NUCLEOTIDE SEQUENCE [LARGE SCALE GENOMIC DNA]</scope>
    <source>
        <strain>O157:H7 / Sakai / RIMD 0509952 / EHEC</strain>
    </source>
</reference>
<gene>
    <name type="primary">mazF</name>
    <name type="synonym">chpA</name>
    <name type="ordered locus">Z4097</name>
    <name type="ordered locus">ECs3642</name>
</gene>
<organism>
    <name type="scientific">Escherichia coli O157:H7</name>
    <dbReference type="NCBI Taxonomy" id="83334"/>
    <lineage>
        <taxon>Bacteria</taxon>
        <taxon>Pseudomonadati</taxon>
        <taxon>Pseudomonadota</taxon>
        <taxon>Gammaproteobacteria</taxon>
        <taxon>Enterobacterales</taxon>
        <taxon>Enterobacteriaceae</taxon>
        <taxon>Escherichia</taxon>
    </lineage>
</organism>
<protein>
    <recommendedName>
        <fullName>Endoribonuclease MazF</fullName>
        <ecNumber>3.1.27.-</ecNumber>
    </recommendedName>
    <alternativeName>
        <fullName>Toxin MazF</fullName>
    </alternativeName>
    <alternativeName>
        <fullName>mRNA interferase MazF</fullName>
    </alternativeName>
</protein>
<name>MAZF_ECO57</name>
<feature type="chain" id="PRO_0000201898" description="Endoribonuclease MazF">
    <location>
        <begin position="1"/>
        <end position="111"/>
    </location>
</feature>
<sequence>MVSRYVPDMGDLIWVDFDPTKGSEQAGHRPAVVLSPFMYNNKTGMCLCVPCTTQSKGYPFEVVLSGQERDGVALADQVKSIAWRARGATKKGTVAPEELQLIKAKINVLIG</sequence>
<proteinExistence type="inferred from homology"/>
<accession>P0AE71</accession>
<accession>P33645</accession>
<keyword id="KW-0238">DNA-binding</keyword>
<keyword id="KW-0255">Endonuclease</keyword>
<keyword id="KW-0378">Hydrolase</keyword>
<keyword id="KW-0540">Nuclease</keyword>
<keyword id="KW-1185">Reference proteome</keyword>
<keyword id="KW-0678">Repressor</keyword>
<keyword id="KW-0694">RNA-binding</keyword>
<keyword id="KW-1277">Toxin-antitoxin system</keyword>
<keyword id="KW-0804">Transcription</keyword>
<keyword id="KW-0805">Transcription regulation</keyword>
<evidence type="ECO:0000250" key="1">
    <source>
        <dbReference type="UniProtKB" id="P0AE70"/>
    </source>
</evidence>
<evidence type="ECO:0000305" key="2"/>
<dbReference type="EC" id="3.1.27.-"/>
<dbReference type="EMBL" id="AE005174">
    <property type="protein sequence ID" value="AAG57895.1"/>
    <property type="molecule type" value="Genomic_DNA"/>
</dbReference>
<dbReference type="EMBL" id="BA000007">
    <property type="protein sequence ID" value="BAB37065.1"/>
    <property type="molecule type" value="Genomic_DNA"/>
</dbReference>
<dbReference type="PIR" id="B91084">
    <property type="entry name" value="B91084"/>
</dbReference>
<dbReference type="PIR" id="C85929">
    <property type="entry name" value="C85929"/>
</dbReference>
<dbReference type="RefSeq" id="NP_311669.1">
    <property type="nucleotide sequence ID" value="NC_002695.1"/>
</dbReference>
<dbReference type="RefSeq" id="WP_000254738.1">
    <property type="nucleotide sequence ID" value="NZ_VOAI01000003.1"/>
</dbReference>
<dbReference type="BMRB" id="P0AE71"/>
<dbReference type="SMR" id="P0AE71"/>
<dbReference type="STRING" id="155864.Z4097"/>
<dbReference type="GeneID" id="916551"/>
<dbReference type="GeneID" id="93779216"/>
<dbReference type="KEGG" id="ece:Z4097"/>
<dbReference type="KEGG" id="ecs:ECs_3642"/>
<dbReference type="PATRIC" id="fig|386585.9.peg.3806"/>
<dbReference type="eggNOG" id="COG2337">
    <property type="taxonomic scope" value="Bacteria"/>
</dbReference>
<dbReference type="HOGENOM" id="CLU_121823_2_3_6"/>
<dbReference type="OMA" id="QIKGYPF"/>
<dbReference type="Proteomes" id="UP000000558">
    <property type="component" value="Chromosome"/>
</dbReference>
<dbReference type="Proteomes" id="UP000002519">
    <property type="component" value="Chromosome"/>
</dbReference>
<dbReference type="GO" id="GO:0003677">
    <property type="term" value="F:DNA binding"/>
    <property type="evidence" value="ECO:0007669"/>
    <property type="project" value="UniProtKB-KW"/>
</dbReference>
<dbReference type="GO" id="GO:0003723">
    <property type="term" value="F:RNA binding"/>
    <property type="evidence" value="ECO:0007669"/>
    <property type="project" value="UniProtKB-KW"/>
</dbReference>
<dbReference type="GO" id="GO:0004521">
    <property type="term" value="F:RNA endonuclease activity"/>
    <property type="evidence" value="ECO:0007669"/>
    <property type="project" value="TreeGrafter"/>
</dbReference>
<dbReference type="GO" id="GO:0006402">
    <property type="term" value="P:mRNA catabolic process"/>
    <property type="evidence" value="ECO:0007669"/>
    <property type="project" value="TreeGrafter"/>
</dbReference>
<dbReference type="GO" id="GO:0016075">
    <property type="term" value="P:rRNA catabolic process"/>
    <property type="evidence" value="ECO:0007669"/>
    <property type="project" value="TreeGrafter"/>
</dbReference>
<dbReference type="FunFam" id="2.30.30.110:FF:000001">
    <property type="entry name" value="Endoribonuclease toxin MazF"/>
    <property type="match status" value="1"/>
</dbReference>
<dbReference type="Gene3D" id="2.30.30.110">
    <property type="match status" value="1"/>
</dbReference>
<dbReference type="InterPro" id="IPR003477">
    <property type="entry name" value="PemK-like"/>
</dbReference>
<dbReference type="InterPro" id="IPR011067">
    <property type="entry name" value="Plasmid_toxin/cell-grow_inhib"/>
</dbReference>
<dbReference type="NCBIfam" id="NF007386">
    <property type="entry name" value="PRK09907.1"/>
    <property type="match status" value="1"/>
</dbReference>
<dbReference type="PANTHER" id="PTHR33988">
    <property type="entry name" value="ENDORIBONUCLEASE MAZF-RELATED"/>
    <property type="match status" value="1"/>
</dbReference>
<dbReference type="PANTHER" id="PTHR33988:SF3">
    <property type="entry name" value="ENDORIBONUCLEASE TOXIN CHPB-RELATED"/>
    <property type="match status" value="1"/>
</dbReference>
<dbReference type="Pfam" id="PF02452">
    <property type="entry name" value="PemK_toxin"/>
    <property type="match status" value="1"/>
</dbReference>
<dbReference type="SUPFAM" id="SSF50118">
    <property type="entry name" value="Cell growth inhibitor/plasmid maintenance toxic component"/>
    <property type="match status" value="1"/>
</dbReference>